<feature type="chain" id="PRO_0000385233" description="Nuclear cap-binding protein subunit 1">
    <location>
        <begin position="1"/>
        <end position="800"/>
    </location>
</feature>
<feature type="domain" description="MIF4G">
    <location>
        <begin position="31"/>
        <end position="243"/>
    </location>
</feature>
<feature type="region of interest" description="Disordered" evidence="2">
    <location>
        <begin position="1"/>
        <end position="26"/>
    </location>
</feature>
<feature type="region of interest" description="Disordered" evidence="2">
    <location>
        <begin position="669"/>
        <end position="700"/>
    </location>
</feature>
<feature type="modified residue" description="Phosphothreonine" evidence="1">
    <location>
        <position position="9"/>
    </location>
</feature>
<gene>
    <name type="primary">Cbp80</name>
    <name type="ORF">GG18719</name>
</gene>
<proteinExistence type="inferred from homology"/>
<organism>
    <name type="scientific">Drosophila erecta</name>
    <name type="common">Fruit fly</name>
    <dbReference type="NCBI Taxonomy" id="7220"/>
    <lineage>
        <taxon>Eukaryota</taxon>
        <taxon>Metazoa</taxon>
        <taxon>Ecdysozoa</taxon>
        <taxon>Arthropoda</taxon>
        <taxon>Hexapoda</taxon>
        <taxon>Insecta</taxon>
        <taxon>Pterygota</taxon>
        <taxon>Neoptera</taxon>
        <taxon>Endopterygota</taxon>
        <taxon>Diptera</taxon>
        <taxon>Brachycera</taxon>
        <taxon>Muscomorpha</taxon>
        <taxon>Ephydroidea</taxon>
        <taxon>Drosophilidae</taxon>
        <taxon>Drosophila</taxon>
        <taxon>Sophophora</taxon>
    </lineage>
</organism>
<name>NCBP1_DROER</name>
<protein>
    <recommendedName>
        <fullName>Nuclear cap-binding protein subunit 1</fullName>
    </recommendedName>
    <alternativeName>
        <fullName>80 kDa nuclear cap-binding protein</fullName>
        <shortName>CBP80</shortName>
        <shortName>NCBP 80 kDa subunit</shortName>
    </alternativeName>
</protein>
<evidence type="ECO:0000250" key="1"/>
<evidence type="ECO:0000256" key="2">
    <source>
        <dbReference type="SAM" id="MobiDB-lite"/>
    </source>
</evidence>
<evidence type="ECO:0000305" key="3"/>
<keyword id="KW-0506">mRNA capping</keyword>
<keyword id="KW-0507">mRNA processing</keyword>
<keyword id="KW-0508">mRNA splicing</keyword>
<keyword id="KW-0539">Nucleus</keyword>
<keyword id="KW-0597">Phosphoprotein</keyword>
<keyword id="KW-0943">RNA-mediated gene silencing</keyword>
<sequence length="800" mass="93161">MSRRRAHDTEDESYDHRRNKRRRVSENQEIEDRLESLILRVGERSTSSVESNLEGLVSVLEADLGTFRLKILRILSDCAVRMPEKCTVYTTLVGLLNAKNYKFGGEFVDHMVKTFKESLKMCRWDAARYSLRFLADLVNCHVISATSLLQLLDTMIDVSNEDTVPQVRRDWFVFAVLSTLPWVGRDLYEKKESALESLLLRIEVYLNKRSKKHHNALRVWSSDAPHPQEEYLDCLWAQIRKLRQDNWAEKHIPRPYLVFDSILCEALQHNLPAIVPPPHHDNFEYPMPWVVYRMFDYTDCPDGPNLPGAHSIERFLIEEHLHHIIETYHHERKDCAAQLLSFPFKHKIPLEYCIVEVIFAELFHMPTPRYLDICYGSILIELCKLQPATLPQVLAQATEILFMRIDSMNTSCFDRFVNWFSYHLSNFKFTWSWDEWDSCLLLDGEHPRPKFIQEVLQKCLRLSYHQRITEMMPTTYAKLIPLTPVPNYKYANEEAANLPGTAVAHQLVVAIRQKCTPEEVVTILKDIPSSGYSGEEMSDGSFNALKIDVFVQTLLNLGSKSFSHSFAAISKFHSVFRALAETEEAQICILHNIYELWSSHQQMMVVLIDKLLKLQIVDCSAVATWIFSKEMTGEFTKMYLWEILHLTIKKMNKHVIKLNSELSEAKDKLAKADSSSSDSEDDSSHKRKKPITHADKPSEEVVERMEEKLEAANVNQKRLFLIVFQRFIMILSEHLLRSDTDGRDPDTDWYRWTIGRLQQVFLMHHEQVQKYSSTLETLLFTSDLDTHILEVFQQFVALRA</sequence>
<dbReference type="EMBL" id="CH954180">
    <property type="protein sequence ID" value="EDV45828.1"/>
    <property type="molecule type" value="Genomic_DNA"/>
</dbReference>
<dbReference type="SMR" id="B3NU52"/>
<dbReference type="EnsemblMetazoa" id="FBtr0138773">
    <property type="protein sequence ID" value="FBpp0137265"/>
    <property type="gene ID" value="FBgn0110928"/>
</dbReference>
<dbReference type="EnsemblMetazoa" id="XM_001976865.3">
    <property type="protein sequence ID" value="XP_001976901.1"/>
    <property type="gene ID" value="LOC6551096"/>
</dbReference>
<dbReference type="GeneID" id="6551096"/>
<dbReference type="KEGG" id="der:6551096"/>
<dbReference type="CTD" id="44409"/>
<dbReference type="eggNOG" id="KOG1104">
    <property type="taxonomic scope" value="Eukaryota"/>
</dbReference>
<dbReference type="HOGENOM" id="CLU_013207_0_0_1"/>
<dbReference type="OMA" id="CAAEGLM"/>
<dbReference type="OrthoDB" id="10252707at2759"/>
<dbReference type="PhylomeDB" id="B3NU52"/>
<dbReference type="ChiTaRS" id="Cbp80">
    <property type="organism name" value="fly"/>
</dbReference>
<dbReference type="Proteomes" id="UP000008711">
    <property type="component" value="Unassembled WGS sequence"/>
</dbReference>
<dbReference type="GO" id="GO:0005846">
    <property type="term" value="C:nuclear cap binding complex"/>
    <property type="evidence" value="ECO:0007669"/>
    <property type="project" value="InterPro"/>
</dbReference>
<dbReference type="GO" id="GO:0005634">
    <property type="term" value="C:nucleus"/>
    <property type="evidence" value="ECO:0007669"/>
    <property type="project" value="UniProtKB-SubCell"/>
</dbReference>
<dbReference type="GO" id="GO:0099524">
    <property type="term" value="C:postsynaptic cytosol"/>
    <property type="evidence" value="ECO:0007669"/>
    <property type="project" value="EnsemblMetazoa"/>
</dbReference>
<dbReference type="GO" id="GO:0099523">
    <property type="term" value="C:presynaptic cytosol"/>
    <property type="evidence" value="ECO:0007669"/>
    <property type="project" value="EnsemblMetazoa"/>
</dbReference>
<dbReference type="GO" id="GO:0003729">
    <property type="term" value="F:mRNA binding"/>
    <property type="evidence" value="ECO:0007669"/>
    <property type="project" value="TreeGrafter"/>
</dbReference>
<dbReference type="GO" id="GO:0000339">
    <property type="term" value="F:RNA cap binding"/>
    <property type="evidence" value="ECO:0007669"/>
    <property type="project" value="InterPro"/>
</dbReference>
<dbReference type="GO" id="GO:0006370">
    <property type="term" value="P:7-methylguanosine mRNA capping"/>
    <property type="evidence" value="ECO:0007669"/>
    <property type="project" value="UniProtKB-KW"/>
</dbReference>
<dbReference type="GO" id="GO:0006406">
    <property type="term" value="P:mRNA export from nucleus"/>
    <property type="evidence" value="ECO:0007669"/>
    <property type="project" value="InterPro"/>
</dbReference>
<dbReference type="GO" id="GO:0045071">
    <property type="term" value="P:negative regulation of viral genome replication"/>
    <property type="evidence" value="ECO:0007669"/>
    <property type="project" value="EnsemblMetazoa"/>
</dbReference>
<dbReference type="GO" id="GO:0000184">
    <property type="term" value="P:nuclear-transcribed mRNA catabolic process, nonsense-mediated decay"/>
    <property type="evidence" value="ECO:0007669"/>
    <property type="project" value="TreeGrafter"/>
</dbReference>
<dbReference type="GO" id="GO:0031053">
    <property type="term" value="P:primary miRNA processing"/>
    <property type="evidence" value="ECO:0007669"/>
    <property type="project" value="EnsemblMetazoa"/>
</dbReference>
<dbReference type="GO" id="GO:0035194">
    <property type="term" value="P:regulatory ncRNA-mediated post-transcriptional gene silencing"/>
    <property type="evidence" value="ECO:0007669"/>
    <property type="project" value="EnsemblMetazoa"/>
</dbReference>
<dbReference type="GO" id="GO:0008380">
    <property type="term" value="P:RNA splicing"/>
    <property type="evidence" value="ECO:0007669"/>
    <property type="project" value="UniProtKB-KW"/>
</dbReference>
<dbReference type="GO" id="GO:0030422">
    <property type="term" value="P:siRNA processing"/>
    <property type="evidence" value="ECO:0007669"/>
    <property type="project" value="EnsemblMetazoa"/>
</dbReference>
<dbReference type="FunFam" id="1.25.40.180:FF:000010">
    <property type="entry name" value="Nuclear cap-binding protein subunit 1"/>
    <property type="match status" value="1"/>
</dbReference>
<dbReference type="FunFam" id="1.25.40.180:FF:000041">
    <property type="entry name" value="Nuclear cap-binding protein subunit 1"/>
    <property type="match status" value="1"/>
</dbReference>
<dbReference type="Gene3D" id="1.25.40.180">
    <property type="match status" value="3"/>
</dbReference>
<dbReference type="InterPro" id="IPR016024">
    <property type="entry name" value="ARM-type_fold"/>
</dbReference>
<dbReference type="InterPro" id="IPR027159">
    <property type="entry name" value="CBP80"/>
</dbReference>
<dbReference type="InterPro" id="IPR015172">
    <property type="entry name" value="MIF4G-like_typ-1"/>
</dbReference>
<dbReference type="InterPro" id="IPR015174">
    <property type="entry name" value="MIF4G-like_typ-2"/>
</dbReference>
<dbReference type="InterPro" id="IPR003890">
    <property type="entry name" value="MIF4G-like_typ-3"/>
</dbReference>
<dbReference type="PANTHER" id="PTHR12412">
    <property type="entry name" value="CAP BINDING PROTEIN"/>
    <property type="match status" value="1"/>
</dbReference>
<dbReference type="PANTHER" id="PTHR12412:SF2">
    <property type="entry name" value="NUCLEAR CAP-BINDING PROTEIN SUBUNIT 1"/>
    <property type="match status" value="1"/>
</dbReference>
<dbReference type="Pfam" id="PF02854">
    <property type="entry name" value="MIF4G"/>
    <property type="match status" value="1"/>
</dbReference>
<dbReference type="Pfam" id="PF09088">
    <property type="entry name" value="MIF4G_like"/>
    <property type="match status" value="1"/>
</dbReference>
<dbReference type="Pfam" id="PF09090">
    <property type="entry name" value="MIF4G_like_2"/>
    <property type="match status" value="1"/>
</dbReference>
<dbReference type="SMART" id="SM00543">
    <property type="entry name" value="MIF4G"/>
    <property type="match status" value="1"/>
</dbReference>
<dbReference type="SUPFAM" id="SSF48371">
    <property type="entry name" value="ARM repeat"/>
    <property type="match status" value="3"/>
</dbReference>
<reference key="1">
    <citation type="journal article" date="2007" name="Nature">
        <title>Evolution of genes and genomes on the Drosophila phylogeny.</title>
        <authorList>
            <consortium name="Drosophila 12 genomes consortium"/>
        </authorList>
    </citation>
    <scope>NUCLEOTIDE SEQUENCE [LARGE SCALE GENOMIC DNA]</scope>
    <source>
        <strain>Tucson 14021-0224.01</strain>
    </source>
</reference>
<accession>B3NU52</accession>
<comment type="function">
    <text evidence="1">Component of the cap-binding complex (CBC), which binds cotranscriptionally to the 5'-cap of pre-mRNAs and is involved in various processes such as pre-mRNA splicing and RNA-mediated gene silencing (RNAi). The CBC complex is involved in miRNA-mediated RNA interference via its interaction with Ars2 and is required for primary microRNAs (miRNAs) processing. Also involved in innate immunity via the short interfering RNAs (siRNAs) processing machinery by restricting the viral RNA production. In the CBC complex, Cbp80 does not bind directly capped RNAs (m7GpppG-capped RNA) but is required to stabilize the movement of the N-terminal loop of Cbp20 and lock the CBC into a high affinity cap-binding state with the cap structure (By similarity).</text>
</comment>
<comment type="subunit">
    <text evidence="1">Component of the nuclear cap-binding complex (CBC), a heterodimer composed of Cbp80 and Cbp20 that interacts with m7GpppG-capped RNA.</text>
</comment>
<comment type="subcellular location">
    <subcellularLocation>
        <location evidence="1">Nucleus</location>
    </subcellularLocation>
</comment>
<comment type="similarity">
    <text evidence="3">Belongs to the NCBP1 family.</text>
</comment>